<sequence>MMRNSRPGRAWRGAVVLTGLLALSGCSMFSSDDDRYKPAELTQYAPGMSVRTAWTASVGSGSGLGFAPTVLGESIYAATPDGSVGKFDLLSGRAIWKSSADAKLSAGAGSDGQTTAVATPDGEVIAFDDTGKIKWRARATSDVAIPPVVGYGVVVVRSGDYRIQAFNAENGERMWSMQRPGPALALRSAAQMVLAEGLVISGLPGGKLLAINSATGNVQWEGTVATPRGASDLERLTDVVGAPRIAGRLMCAVAYQGRIVCFDVSAGGRPIWAKDFSSASGMVIDDRFAYAPDQGSVVSAFALDSGNNVWKQAELKNRLLTAPALLGEAVAVGDFEGYVHFLSRSDGRLLARLSVGGGAIVSPPQTTSQGVLVQTGNGSLVMVRAN</sequence>
<proteinExistence type="inferred from homology"/>
<comment type="function">
    <text evidence="1">Part of the outer membrane protein assembly complex, which is involved in assembly and insertion of beta-barrel proteins into the outer membrane.</text>
</comment>
<comment type="subunit">
    <text evidence="1">Part of the Bam complex.</text>
</comment>
<comment type="subcellular location">
    <subcellularLocation>
        <location evidence="1">Cell outer membrane</location>
        <topology evidence="1">Lipid-anchor</topology>
    </subcellularLocation>
</comment>
<comment type="similarity">
    <text evidence="1">Belongs to the BamB family.</text>
</comment>
<reference key="1">
    <citation type="journal article" date="2003" name="Nat. Genet.">
        <title>Comparative analysis of the genome sequences of Bordetella pertussis, Bordetella parapertussis and Bordetella bronchiseptica.</title>
        <authorList>
            <person name="Parkhill J."/>
            <person name="Sebaihia M."/>
            <person name="Preston A."/>
            <person name="Murphy L.D."/>
            <person name="Thomson N.R."/>
            <person name="Harris D.E."/>
            <person name="Holden M.T.G."/>
            <person name="Churcher C.M."/>
            <person name="Bentley S.D."/>
            <person name="Mungall K.L."/>
            <person name="Cerdeno-Tarraga A.-M."/>
            <person name="Temple L."/>
            <person name="James K.D."/>
            <person name="Harris B."/>
            <person name="Quail M.A."/>
            <person name="Achtman M."/>
            <person name="Atkin R."/>
            <person name="Baker S."/>
            <person name="Basham D."/>
            <person name="Bason N."/>
            <person name="Cherevach I."/>
            <person name="Chillingworth T."/>
            <person name="Collins M."/>
            <person name="Cronin A."/>
            <person name="Davis P."/>
            <person name="Doggett J."/>
            <person name="Feltwell T."/>
            <person name="Goble A."/>
            <person name="Hamlin N."/>
            <person name="Hauser H."/>
            <person name="Holroyd S."/>
            <person name="Jagels K."/>
            <person name="Leather S."/>
            <person name="Moule S."/>
            <person name="Norberczak H."/>
            <person name="O'Neil S."/>
            <person name="Ormond D."/>
            <person name="Price C."/>
            <person name="Rabbinowitsch E."/>
            <person name="Rutter S."/>
            <person name="Sanders M."/>
            <person name="Saunders D."/>
            <person name="Seeger K."/>
            <person name="Sharp S."/>
            <person name="Simmonds M."/>
            <person name="Skelton J."/>
            <person name="Squares R."/>
            <person name="Squares S."/>
            <person name="Stevens K."/>
            <person name="Unwin L."/>
            <person name="Whitehead S."/>
            <person name="Barrell B.G."/>
            <person name="Maskell D.J."/>
        </authorList>
    </citation>
    <scope>NUCLEOTIDE SEQUENCE [LARGE SCALE GENOMIC DNA]</scope>
    <source>
        <strain>Tohama I / ATCC BAA-589 / NCTC 13251</strain>
    </source>
</reference>
<protein>
    <recommendedName>
        <fullName evidence="1">Outer membrane protein assembly factor BamB</fullName>
    </recommendedName>
</protein>
<dbReference type="EMBL" id="BX640417">
    <property type="protein sequence ID" value="CAE42474.1"/>
    <property type="molecule type" value="Genomic_DNA"/>
</dbReference>
<dbReference type="RefSeq" id="NP_880844.1">
    <property type="nucleotide sequence ID" value="NC_002929.2"/>
</dbReference>
<dbReference type="RefSeq" id="WP_003810701.1">
    <property type="nucleotide sequence ID" value="NZ_CP039022.1"/>
</dbReference>
<dbReference type="SMR" id="Q7VWL3"/>
<dbReference type="STRING" id="257313.BP2196"/>
<dbReference type="PaxDb" id="257313-BP2196"/>
<dbReference type="GeneID" id="93204639"/>
<dbReference type="KEGG" id="bpe:BP2196"/>
<dbReference type="PATRIC" id="fig|257313.5.peg.2370"/>
<dbReference type="eggNOG" id="COG1520">
    <property type="taxonomic scope" value="Bacteria"/>
</dbReference>
<dbReference type="HOGENOM" id="CLU_027480_0_1_4"/>
<dbReference type="Proteomes" id="UP000002676">
    <property type="component" value="Chromosome"/>
</dbReference>
<dbReference type="GO" id="GO:0009279">
    <property type="term" value="C:cell outer membrane"/>
    <property type="evidence" value="ECO:0007669"/>
    <property type="project" value="UniProtKB-SubCell"/>
</dbReference>
<dbReference type="GO" id="GO:0043165">
    <property type="term" value="P:Gram-negative-bacterium-type cell outer membrane assembly"/>
    <property type="evidence" value="ECO:0007669"/>
    <property type="project" value="UniProtKB-UniRule"/>
</dbReference>
<dbReference type="GO" id="GO:0051205">
    <property type="term" value="P:protein insertion into membrane"/>
    <property type="evidence" value="ECO:0007669"/>
    <property type="project" value="UniProtKB-UniRule"/>
</dbReference>
<dbReference type="Gene3D" id="2.130.10.10">
    <property type="entry name" value="YVTN repeat-like/Quinoprotein amine dehydrogenase"/>
    <property type="match status" value="1"/>
</dbReference>
<dbReference type="HAMAP" id="MF_00923">
    <property type="entry name" value="OM_assembly_BamB"/>
    <property type="match status" value="1"/>
</dbReference>
<dbReference type="InterPro" id="IPR017687">
    <property type="entry name" value="BamB"/>
</dbReference>
<dbReference type="InterPro" id="IPR018391">
    <property type="entry name" value="PQQ_b-propeller_rpt"/>
</dbReference>
<dbReference type="InterPro" id="IPR002372">
    <property type="entry name" value="PQQ_rpt_dom"/>
</dbReference>
<dbReference type="InterPro" id="IPR011047">
    <property type="entry name" value="Quinoprotein_ADH-like_sf"/>
</dbReference>
<dbReference type="InterPro" id="IPR015943">
    <property type="entry name" value="WD40/YVTN_repeat-like_dom_sf"/>
</dbReference>
<dbReference type="NCBIfam" id="TIGR03300">
    <property type="entry name" value="assembly_YfgL"/>
    <property type="match status" value="1"/>
</dbReference>
<dbReference type="PANTHER" id="PTHR34512">
    <property type="entry name" value="CELL SURFACE PROTEIN"/>
    <property type="match status" value="1"/>
</dbReference>
<dbReference type="PANTHER" id="PTHR34512:SF30">
    <property type="entry name" value="OUTER MEMBRANE PROTEIN ASSEMBLY FACTOR BAMB"/>
    <property type="match status" value="1"/>
</dbReference>
<dbReference type="Pfam" id="PF13360">
    <property type="entry name" value="PQQ_2"/>
    <property type="match status" value="1"/>
</dbReference>
<dbReference type="SMART" id="SM00564">
    <property type="entry name" value="PQQ"/>
    <property type="match status" value="6"/>
</dbReference>
<dbReference type="SUPFAM" id="SSF50998">
    <property type="entry name" value="Quinoprotein alcohol dehydrogenase-like"/>
    <property type="match status" value="1"/>
</dbReference>
<dbReference type="PROSITE" id="PS51257">
    <property type="entry name" value="PROKAR_LIPOPROTEIN"/>
    <property type="match status" value="1"/>
</dbReference>
<accession>Q7VWL3</accession>
<evidence type="ECO:0000255" key="1">
    <source>
        <dbReference type="HAMAP-Rule" id="MF_00923"/>
    </source>
</evidence>
<name>BAMB_BORPE</name>
<feature type="signal peptide" evidence="1">
    <location>
        <begin position="1"/>
        <end position="25"/>
    </location>
</feature>
<feature type="chain" id="PRO_0000417677" description="Outer membrane protein assembly factor BamB">
    <location>
        <begin position="26"/>
        <end position="386"/>
    </location>
</feature>
<feature type="lipid moiety-binding region" description="N-palmitoyl cysteine" evidence="1">
    <location>
        <position position="26"/>
    </location>
</feature>
<feature type="lipid moiety-binding region" description="S-diacylglycerol cysteine" evidence="1">
    <location>
        <position position="26"/>
    </location>
</feature>
<gene>
    <name evidence="1" type="primary">bamB</name>
    <name type="ordered locus">BP2196</name>
</gene>
<keyword id="KW-0998">Cell outer membrane</keyword>
<keyword id="KW-0449">Lipoprotein</keyword>
<keyword id="KW-0472">Membrane</keyword>
<keyword id="KW-0564">Palmitate</keyword>
<keyword id="KW-1185">Reference proteome</keyword>
<keyword id="KW-0732">Signal</keyword>
<organism>
    <name type="scientific">Bordetella pertussis (strain Tohama I / ATCC BAA-589 / NCTC 13251)</name>
    <dbReference type="NCBI Taxonomy" id="257313"/>
    <lineage>
        <taxon>Bacteria</taxon>
        <taxon>Pseudomonadati</taxon>
        <taxon>Pseudomonadota</taxon>
        <taxon>Betaproteobacteria</taxon>
        <taxon>Burkholderiales</taxon>
        <taxon>Alcaligenaceae</taxon>
        <taxon>Bordetella</taxon>
    </lineage>
</organism>